<evidence type="ECO:0000250" key="1"/>
<evidence type="ECO:0000250" key="2">
    <source>
        <dbReference type="UniProtKB" id="Q38997"/>
    </source>
</evidence>
<evidence type="ECO:0000250" key="3">
    <source>
        <dbReference type="UniProtKB" id="Q93V58"/>
    </source>
</evidence>
<evidence type="ECO:0000255" key="4">
    <source>
        <dbReference type="PROSITE-ProRule" id="PRU00159"/>
    </source>
</evidence>
<evidence type="ECO:0000255" key="5">
    <source>
        <dbReference type="PROSITE-ProRule" id="PRU00256"/>
    </source>
</evidence>
<evidence type="ECO:0000255" key="6">
    <source>
        <dbReference type="PROSITE-ProRule" id="PRU10027"/>
    </source>
</evidence>
<evidence type="ECO:0000305" key="7"/>
<accession>Q9LEU7</accession>
<accession>Q8H0X3</accession>
<accession>Q9LKF7</accession>
<reference key="1">
    <citation type="journal article" date="2000" name="Plant Physiol.">
        <title>Interaction specificity of Arabidopsis calcineurin B-like calcium sensors and their target kinases.</title>
        <authorList>
            <person name="Kim K.-N."/>
            <person name="Cheong Y.H."/>
            <person name="Gupta R."/>
            <person name="Luan S."/>
        </authorList>
    </citation>
    <scope>NUCLEOTIDE SEQUENCE [MRNA]</scope>
    <source>
        <strain>cv. Columbia</strain>
    </source>
</reference>
<reference key="2">
    <citation type="journal article" date="2000" name="Nature">
        <title>Sequence and analysis of chromosome 5 of the plant Arabidopsis thaliana.</title>
        <authorList>
            <person name="Tabata S."/>
            <person name="Kaneko T."/>
            <person name="Nakamura Y."/>
            <person name="Kotani H."/>
            <person name="Kato T."/>
            <person name="Asamizu E."/>
            <person name="Miyajima N."/>
            <person name="Sasamoto S."/>
            <person name="Kimura T."/>
            <person name="Hosouchi T."/>
            <person name="Kawashima K."/>
            <person name="Kohara M."/>
            <person name="Matsumoto M."/>
            <person name="Matsuno A."/>
            <person name="Muraki A."/>
            <person name="Nakayama S."/>
            <person name="Nakazaki N."/>
            <person name="Naruo K."/>
            <person name="Okumura S."/>
            <person name="Shinpo S."/>
            <person name="Takeuchi C."/>
            <person name="Wada T."/>
            <person name="Watanabe A."/>
            <person name="Yamada M."/>
            <person name="Yasuda M."/>
            <person name="Sato S."/>
            <person name="de la Bastide M."/>
            <person name="Huang E."/>
            <person name="Spiegel L."/>
            <person name="Gnoj L."/>
            <person name="O'Shaughnessy A."/>
            <person name="Preston R."/>
            <person name="Habermann K."/>
            <person name="Murray J."/>
            <person name="Johnson D."/>
            <person name="Rohlfing T."/>
            <person name="Nelson J."/>
            <person name="Stoneking T."/>
            <person name="Pepin K."/>
            <person name="Spieth J."/>
            <person name="Sekhon M."/>
            <person name="Armstrong J."/>
            <person name="Becker M."/>
            <person name="Belter E."/>
            <person name="Cordum H."/>
            <person name="Cordes M."/>
            <person name="Courtney L."/>
            <person name="Courtney W."/>
            <person name="Dante M."/>
            <person name="Du H."/>
            <person name="Edwards J."/>
            <person name="Fryman J."/>
            <person name="Haakensen B."/>
            <person name="Lamar E."/>
            <person name="Latreille P."/>
            <person name="Leonard S."/>
            <person name="Meyer R."/>
            <person name="Mulvaney E."/>
            <person name="Ozersky P."/>
            <person name="Riley A."/>
            <person name="Strowmatt C."/>
            <person name="Wagner-McPherson C."/>
            <person name="Wollam A."/>
            <person name="Yoakum M."/>
            <person name="Bell M."/>
            <person name="Dedhia N."/>
            <person name="Parnell L."/>
            <person name="Shah R."/>
            <person name="Rodriguez M."/>
            <person name="Hoon See L."/>
            <person name="Vil D."/>
            <person name="Baker J."/>
            <person name="Kirchoff K."/>
            <person name="Toth K."/>
            <person name="King L."/>
            <person name="Bahret A."/>
            <person name="Miller B."/>
            <person name="Marra M.A."/>
            <person name="Martienssen R."/>
            <person name="McCombie W.R."/>
            <person name="Wilson R.K."/>
            <person name="Murphy G."/>
            <person name="Bancroft I."/>
            <person name="Volckaert G."/>
            <person name="Wambutt R."/>
            <person name="Duesterhoeft A."/>
            <person name="Stiekema W."/>
            <person name="Pohl T."/>
            <person name="Entian K.-D."/>
            <person name="Terryn N."/>
            <person name="Hartley N."/>
            <person name="Bent E."/>
            <person name="Johnson S."/>
            <person name="Langham S.-A."/>
            <person name="McCullagh B."/>
            <person name="Robben J."/>
            <person name="Grymonprez B."/>
            <person name="Zimmermann W."/>
            <person name="Ramsperger U."/>
            <person name="Wedler H."/>
            <person name="Balke K."/>
            <person name="Wedler E."/>
            <person name="Peters S."/>
            <person name="van Staveren M."/>
            <person name="Dirkse W."/>
            <person name="Mooijman P."/>
            <person name="Klein Lankhorst R."/>
            <person name="Weitzenegger T."/>
            <person name="Bothe G."/>
            <person name="Rose M."/>
            <person name="Hauf J."/>
            <person name="Berneiser S."/>
            <person name="Hempel S."/>
            <person name="Feldpausch M."/>
            <person name="Lamberth S."/>
            <person name="Villarroel R."/>
            <person name="Gielen J."/>
            <person name="Ardiles W."/>
            <person name="Bents O."/>
            <person name="Lemcke K."/>
            <person name="Kolesov G."/>
            <person name="Mayer K.F.X."/>
            <person name="Rudd S."/>
            <person name="Schoof H."/>
            <person name="Schueller C."/>
            <person name="Zaccaria P."/>
            <person name="Mewes H.-W."/>
            <person name="Bevan M."/>
            <person name="Fransz P.F."/>
        </authorList>
    </citation>
    <scope>NUCLEOTIDE SEQUENCE [LARGE SCALE GENOMIC DNA]</scope>
    <source>
        <strain>cv. Columbia</strain>
    </source>
</reference>
<reference key="3">
    <citation type="journal article" date="2017" name="Plant J.">
        <title>Araport11: a complete reannotation of the Arabidopsis thaliana reference genome.</title>
        <authorList>
            <person name="Cheng C.Y."/>
            <person name="Krishnakumar V."/>
            <person name="Chan A.P."/>
            <person name="Thibaud-Nissen F."/>
            <person name="Schobel S."/>
            <person name="Town C.D."/>
        </authorList>
    </citation>
    <scope>GENOME REANNOTATION</scope>
    <source>
        <strain>cv. Columbia</strain>
    </source>
</reference>
<reference key="4">
    <citation type="journal article" date="2003" name="Science">
        <title>Empirical analysis of transcriptional activity in the Arabidopsis genome.</title>
        <authorList>
            <person name="Yamada K."/>
            <person name="Lim J."/>
            <person name="Dale J.M."/>
            <person name="Chen H."/>
            <person name="Shinn P."/>
            <person name="Palm C.J."/>
            <person name="Southwick A.M."/>
            <person name="Wu H.C."/>
            <person name="Kim C.J."/>
            <person name="Nguyen M."/>
            <person name="Pham P.K."/>
            <person name="Cheuk R.F."/>
            <person name="Karlin-Newmann G."/>
            <person name="Liu S.X."/>
            <person name="Lam B."/>
            <person name="Sakano H."/>
            <person name="Wu T."/>
            <person name="Yu G."/>
            <person name="Miranda M."/>
            <person name="Quach H.L."/>
            <person name="Tripp M."/>
            <person name="Chang C.H."/>
            <person name="Lee J.M."/>
            <person name="Toriumi M.J."/>
            <person name="Chan M.M."/>
            <person name="Tang C.C."/>
            <person name="Onodera C.S."/>
            <person name="Deng J.M."/>
            <person name="Akiyama K."/>
            <person name="Ansari Y."/>
            <person name="Arakawa T."/>
            <person name="Banh J."/>
            <person name="Banno F."/>
            <person name="Bowser L."/>
            <person name="Brooks S.Y."/>
            <person name="Carninci P."/>
            <person name="Chao Q."/>
            <person name="Choy N."/>
            <person name="Enju A."/>
            <person name="Goldsmith A.D."/>
            <person name="Gurjal M."/>
            <person name="Hansen N.F."/>
            <person name="Hayashizaki Y."/>
            <person name="Johnson-Hopson C."/>
            <person name="Hsuan V.W."/>
            <person name="Iida K."/>
            <person name="Karnes M."/>
            <person name="Khan S."/>
            <person name="Koesema E."/>
            <person name="Ishida J."/>
            <person name="Jiang P.X."/>
            <person name="Jones T."/>
            <person name="Kawai J."/>
            <person name="Kamiya A."/>
            <person name="Meyers C."/>
            <person name="Nakajima M."/>
            <person name="Narusaka M."/>
            <person name="Seki M."/>
            <person name="Sakurai T."/>
            <person name="Satou M."/>
            <person name="Tamse R."/>
            <person name="Vaysberg M."/>
            <person name="Wallender E.K."/>
            <person name="Wong C."/>
            <person name="Yamamura Y."/>
            <person name="Yuan S."/>
            <person name="Shinozaki K."/>
            <person name="Davis R.W."/>
            <person name="Theologis A."/>
            <person name="Ecker J.R."/>
        </authorList>
    </citation>
    <scope>NUCLEOTIDE SEQUENCE [LARGE SCALE MRNA]</scope>
    <source>
        <strain>cv. Columbia</strain>
    </source>
</reference>
<reference key="5">
    <citation type="journal article" date="2003" name="Plant Physiol.">
        <title>The Arabidopsis CDPK-SnRK superfamily of protein kinases.</title>
        <authorList>
            <person name="Hrabak E.M."/>
            <person name="Chan C.W.M."/>
            <person name="Gribskov M."/>
            <person name="Harper J.F."/>
            <person name="Choi J.H."/>
            <person name="Halford N."/>
            <person name="Kudla J."/>
            <person name="Luan S."/>
            <person name="Nimmo H.G."/>
            <person name="Sussman M.R."/>
            <person name="Thomas M."/>
            <person name="Walker-Simmons K."/>
            <person name="Zhu J.-K."/>
            <person name="Harmon A.C."/>
        </authorList>
    </citation>
    <scope>GENE FAMILY</scope>
    <scope>NOMENCLATURE</scope>
</reference>
<comment type="function">
    <text evidence="1">CIPK serine-threonine protein kinases interact with CBL proteins. Binding of a CBL protein to the regulatory NAF domain of CIPK protein lead to the activation of the kinase in a calcium-dependent manner (By similarity).</text>
</comment>
<comment type="catalytic activity">
    <reaction>
        <text>L-seryl-[protein] + ATP = O-phospho-L-seryl-[protein] + ADP + H(+)</text>
        <dbReference type="Rhea" id="RHEA:17989"/>
        <dbReference type="Rhea" id="RHEA-COMP:9863"/>
        <dbReference type="Rhea" id="RHEA-COMP:11604"/>
        <dbReference type="ChEBI" id="CHEBI:15378"/>
        <dbReference type="ChEBI" id="CHEBI:29999"/>
        <dbReference type="ChEBI" id="CHEBI:30616"/>
        <dbReference type="ChEBI" id="CHEBI:83421"/>
        <dbReference type="ChEBI" id="CHEBI:456216"/>
        <dbReference type="EC" id="2.7.11.1"/>
    </reaction>
</comment>
<comment type="catalytic activity">
    <reaction>
        <text>L-threonyl-[protein] + ATP = O-phospho-L-threonyl-[protein] + ADP + H(+)</text>
        <dbReference type="Rhea" id="RHEA:46608"/>
        <dbReference type="Rhea" id="RHEA-COMP:11060"/>
        <dbReference type="Rhea" id="RHEA-COMP:11605"/>
        <dbReference type="ChEBI" id="CHEBI:15378"/>
        <dbReference type="ChEBI" id="CHEBI:30013"/>
        <dbReference type="ChEBI" id="CHEBI:30616"/>
        <dbReference type="ChEBI" id="CHEBI:61977"/>
        <dbReference type="ChEBI" id="CHEBI:456216"/>
        <dbReference type="EC" id="2.7.11.1"/>
    </reaction>
</comment>
<comment type="cofactor">
    <cofactor evidence="1">
        <name>Mn(2+)</name>
        <dbReference type="ChEBI" id="CHEBI:29035"/>
    </cofactor>
</comment>
<comment type="interaction">
    <interactant intactId="EBI-2026322">
        <id>Q9LEU7</id>
    </interactant>
    <interactant intactId="EBI-25521388">
        <id>A0A384KPL6</id>
        <label>AXX17_At3g03720</label>
    </interactant>
    <organismsDiffer>false</organismsDiffer>
    <experiments>3</experiments>
</comment>
<comment type="interaction">
    <interactant intactId="EBI-2026322">
        <id>Q9LEU7</id>
    </interactant>
    <interactant intactId="EBI-974530">
        <id>O81445</id>
        <label>CBL1</label>
    </interactant>
    <organismsDiffer>false</organismsDiffer>
    <experiments>5</experiments>
</comment>
<comment type="interaction">
    <interactant intactId="EBI-2026322">
        <id>Q9LEU7</id>
    </interactant>
    <interactant intactId="EBI-637381">
        <id>Q9LTB8</id>
        <label>CBL9</label>
    </interactant>
    <organismsDiffer>false</organismsDiffer>
    <experiments>6</experiments>
</comment>
<comment type="interaction">
    <interactant intactId="EBI-2026322">
        <id>Q9LEU7</id>
    </interactant>
    <interactant intactId="EBI-2012188">
        <id>Q8RXD6</id>
        <label>HUB1</label>
    </interactant>
    <organismsDiffer>false</organismsDiffer>
    <experiments>3</experiments>
</comment>
<comment type="interaction">
    <interactant intactId="EBI-2026322">
        <id>Q9LEU7</id>
    </interactant>
    <interactant intactId="EBI-1238013">
        <id>O22179</id>
        <label>MYB70</label>
    </interactant>
    <organismsDiffer>false</organismsDiffer>
    <experiments>3</experiments>
</comment>
<comment type="domain">
    <text evidence="1">The activation loop within the kinase domain is the target of phosphorylation/activation by upstream protein kinases. The PPI motif mediates the interaction with the ABI (abscisic acid-insensitive) phosphatases (By similarity).</text>
</comment>
<comment type="similarity">
    <text evidence="7">Belongs to the protein kinase superfamily. CAMK Ser/Thr protein kinase family. SNF1 subfamily.</text>
</comment>
<proteinExistence type="evidence at protein level"/>
<gene>
    <name type="primary">CIPK5</name>
    <name type="synonym">PKS19</name>
    <name type="synonym">SnRK3.24</name>
    <name type="ordered locus">At5g10930</name>
    <name type="ORF">T30N20.200</name>
</gene>
<organism>
    <name type="scientific">Arabidopsis thaliana</name>
    <name type="common">Mouse-ear cress</name>
    <dbReference type="NCBI Taxonomy" id="3702"/>
    <lineage>
        <taxon>Eukaryota</taxon>
        <taxon>Viridiplantae</taxon>
        <taxon>Streptophyta</taxon>
        <taxon>Embryophyta</taxon>
        <taxon>Tracheophyta</taxon>
        <taxon>Spermatophyta</taxon>
        <taxon>Magnoliopsida</taxon>
        <taxon>eudicotyledons</taxon>
        <taxon>Gunneridae</taxon>
        <taxon>Pentapetalae</taxon>
        <taxon>rosids</taxon>
        <taxon>malvids</taxon>
        <taxon>Brassicales</taxon>
        <taxon>Brassicaceae</taxon>
        <taxon>Camelineae</taxon>
        <taxon>Arabidopsis</taxon>
    </lineage>
</organism>
<sequence>MEEERRVLFGKYEMGRLLGKGTFAKVYYGKEIIGGECVAIKVINKDQVMKRPGMMEQIKREISIMKLVRHPNIVELKEVMATKTKIFFVMEFVKGGELFCKISKGKLHEDAARRYFQQLISAVDYCHSRGVSHRDLKPENLLLDENGDLKISDFGLSALPEQILQDGLLHTQCGTPAYVAPEVLKKKGYDGAKADIWSCGVVLYVLLAGCLPFQDENLMNMYRKIFRADFEFPPWFSPEARRLISKLLVVDPDRRISIPAIMRTPWLRKNFTPPLAFKIDEPICSQSSKNNEEEEEDGDCENQTEPISPKFFNAFEFISSMSSGFDLSSLFESKRKVQSVFTSRSSATEVMEKIETVTKEMNMKVKRTKDFKVKMEGKTEGRKGRLSMTAEVFEVAPEISVVEFCKSAGDTLEYDRLYEEEVRPALNDIVWSWHGDNNNTSSEDC</sequence>
<dbReference type="EC" id="2.7.11.1"/>
<dbReference type="EMBL" id="AF285105">
    <property type="protein sequence ID" value="AAF86504.2"/>
    <property type="molecule type" value="mRNA"/>
</dbReference>
<dbReference type="EMBL" id="AL365234">
    <property type="protein sequence ID" value="CAB96848.1"/>
    <property type="molecule type" value="Genomic_DNA"/>
</dbReference>
<dbReference type="EMBL" id="CP002688">
    <property type="protein sequence ID" value="AED91610.1"/>
    <property type="molecule type" value="Genomic_DNA"/>
</dbReference>
<dbReference type="EMBL" id="AY062765">
    <property type="protein sequence ID" value="AAL32843.1"/>
    <property type="molecule type" value="mRNA"/>
</dbReference>
<dbReference type="EMBL" id="BT001234">
    <property type="protein sequence ID" value="AAN65121.1"/>
    <property type="molecule type" value="mRNA"/>
</dbReference>
<dbReference type="PIR" id="T50802">
    <property type="entry name" value="T50802"/>
</dbReference>
<dbReference type="RefSeq" id="NP_568241.2">
    <property type="nucleotide sequence ID" value="NM_121131.3"/>
</dbReference>
<dbReference type="SMR" id="Q9LEU7"/>
<dbReference type="BioGRID" id="16238">
    <property type="interactions" value="10"/>
</dbReference>
<dbReference type="FunCoup" id="Q9LEU7">
    <property type="interactions" value="748"/>
</dbReference>
<dbReference type="IntAct" id="Q9LEU7">
    <property type="interactions" value="7"/>
</dbReference>
<dbReference type="STRING" id="3702.Q9LEU7"/>
<dbReference type="iPTMnet" id="Q9LEU7"/>
<dbReference type="PaxDb" id="3702-AT5G10930.1"/>
<dbReference type="ProteomicsDB" id="246792"/>
<dbReference type="EnsemblPlants" id="AT5G10930.1">
    <property type="protein sequence ID" value="AT5G10930.1"/>
    <property type="gene ID" value="AT5G10930"/>
</dbReference>
<dbReference type="GeneID" id="830960"/>
<dbReference type="Gramene" id="AT5G10930.1">
    <property type="protein sequence ID" value="AT5G10930.1"/>
    <property type="gene ID" value="AT5G10930"/>
</dbReference>
<dbReference type="KEGG" id="ath:AT5G10930"/>
<dbReference type="Araport" id="AT5G10930"/>
<dbReference type="TAIR" id="AT5G10930">
    <property type="gene designation" value="CIPK5"/>
</dbReference>
<dbReference type="eggNOG" id="KOG0583">
    <property type="taxonomic scope" value="Eukaryota"/>
</dbReference>
<dbReference type="HOGENOM" id="CLU_000288_59_0_1"/>
<dbReference type="InParanoid" id="Q9LEU7"/>
<dbReference type="OMA" id="FAMPRAF"/>
<dbReference type="PhylomeDB" id="Q9LEU7"/>
<dbReference type="PRO" id="PR:Q9LEU7"/>
<dbReference type="Proteomes" id="UP000006548">
    <property type="component" value="Chromosome 5"/>
</dbReference>
<dbReference type="ExpressionAtlas" id="Q9LEU7">
    <property type="expression patterns" value="baseline and differential"/>
</dbReference>
<dbReference type="GO" id="GO:0005524">
    <property type="term" value="F:ATP binding"/>
    <property type="evidence" value="ECO:0007669"/>
    <property type="project" value="UniProtKB-KW"/>
</dbReference>
<dbReference type="GO" id="GO:0106310">
    <property type="term" value="F:protein serine kinase activity"/>
    <property type="evidence" value="ECO:0007669"/>
    <property type="project" value="RHEA"/>
</dbReference>
<dbReference type="GO" id="GO:0004674">
    <property type="term" value="F:protein serine/threonine kinase activity"/>
    <property type="evidence" value="ECO:0007669"/>
    <property type="project" value="UniProtKB-KW"/>
</dbReference>
<dbReference type="GO" id="GO:0051592">
    <property type="term" value="P:response to calcium ion"/>
    <property type="evidence" value="ECO:0000270"/>
    <property type="project" value="TAIR"/>
</dbReference>
<dbReference type="GO" id="GO:0007165">
    <property type="term" value="P:signal transduction"/>
    <property type="evidence" value="ECO:0007669"/>
    <property type="project" value="InterPro"/>
</dbReference>
<dbReference type="CDD" id="cd12195">
    <property type="entry name" value="CIPK_C"/>
    <property type="match status" value="1"/>
</dbReference>
<dbReference type="CDD" id="cd14663">
    <property type="entry name" value="STKc_SnRK3"/>
    <property type="match status" value="1"/>
</dbReference>
<dbReference type="FunFam" id="1.10.510.10:FF:000279">
    <property type="entry name" value="Non-specific serine/threonine protein kinase"/>
    <property type="match status" value="1"/>
</dbReference>
<dbReference type="FunFam" id="3.30.200.20:FF:000096">
    <property type="entry name" value="Non-specific serine/threonine protein kinase"/>
    <property type="match status" value="1"/>
</dbReference>
<dbReference type="FunFam" id="3.30.310.80:FF:000005">
    <property type="entry name" value="Non-specific serine/threonine protein kinase"/>
    <property type="match status" value="1"/>
</dbReference>
<dbReference type="Gene3D" id="3.30.310.80">
    <property type="entry name" value="Kinase associated domain 1, KA1"/>
    <property type="match status" value="1"/>
</dbReference>
<dbReference type="Gene3D" id="3.30.200.20">
    <property type="entry name" value="Phosphorylase Kinase, domain 1"/>
    <property type="match status" value="1"/>
</dbReference>
<dbReference type="Gene3D" id="1.10.510.10">
    <property type="entry name" value="Transferase(Phosphotransferase) domain 1"/>
    <property type="match status" value="1"/>
</dbReference>
<dbReference type="InterPro" id="IPR011009">
    <property type="entry name" value="Kinase-like_dom_sf"/>
</dbReference>
<dbReference type="InterPro" id="IPR018451">
    <property type="entry name" value="NAF/FISL_domain"/>
</dbReference>
<dbReference type="InterPro" id="IPR004041">
    <property type="entry name" value="NAF_dom"/>
</dbReference>
<dbReference type="InterPro" id="IPR000719">
    <property type="entry name" value="Prot_kinase_dom"/>
</dbReference>
<dbReference type="InterPro" id="IPR017441">
    <property type="entry name" value="Protein_kinase_ATP_BS"/>
</dbReference>
<dbReference type="InterPro" id="IPR008271">
    <property type="entry name" value="Ser/Thr_kinase_AS"/>
</dbReference>
<dbReference type="PANTHER" id="PTHR43895">
    <property type="entry name" value="CALCIUM/CALMODULIN-DEPENDENT PROTEIN KINASE KINASE-RELATED"/>
    <property type="match status" value="1"/>
</dbReference>
<dbReference type="PANTHER" id="PTHR43895:SF146">
    <property type="entry name" value="CBL-INTERACTING SERINE_THREONINE-PROTEIN KINASE 5"/>
    <property type="match status" value="1"/>
</dbReference>
<dbReference type="Pfam" id="PF03822">
    <property type="entry name" value="NAF"/>
    <property type="match status" value="1"/>
</dbReference>
<dbReference type="Pfam" id="PF00069">
    <property type="entry name" value="Pkinase"/>
    <property type="match status" value="1"/>
</dbReference>
<dbReference type="SMART" id="SM00220">
    <property type="entry name" value="S_TKc"/>
    <property type="match status" value="1"/>
</dbReference>
<dbReference type="SUPFAM" id="SSF56112">
    <property type="entry name" value="Protein kinase-like (PK-like)"/>
    <property type="match status" value="1"/>
</dbReference>
<dbReference type="PROSITE" id="PS50816">
    <property type="entry name" value="NAF"/>
    <property type="match status" value="1"/>
</dbReference>
<dbReference type="PROSITE" id="PS00107">
    <property type="entry name" value="PROTEIN_KINASE_ATP"/>
    <property type="match status" value="1"/>
</dbReference>
<dbReference type="PROSITE" id="PS50011">
    <property type="entry name" value="PROTEIN_KINASE_DOM"/>
    <property type="match status" value="1"/>
</dbReference>
<dbReference type="PROSITE" id="PS00108">
    <property type="entry name" value="PROTEIN_KINASE_ST"/>
    <property type="match status" value="1"/>
</dbReference>
<feature type="chain" id="PRO_0000337208" description="CBL-interacting serine/threonine-protein kinase 5">
    <location>
        <begin position="1"/>
        <end position="445"/>
    </location>
</feature>
<feature type="domain" description="Protein kinase" evidence="4">
    <location>
        <begin position="12"/>
        <end position="267"/>
    </location>
</feature>
<feature type="domain" description="NAF" evidence="5">
    <location>
        <begin position="307"/>
        <end position="332"/>
    </location>
</feature>
<feature type="region of interest" description="Activation loop" evidence="1">
    <location>
        <begin position="153"/>
        <end position="182"/>
    </location>
</feature>
<feature type="region of interest" description="PPI" evidence="1">
    <location>
        <begin position="336"/>
        <end position="366"/>
    </location>
</feature>
<feature type="active site" description="Proton acceptor" evidence="4 6">
    <location>
        <position position="135"/>
    </location>
</feature>
<feature type="binding site" evidence="4">
    <location>
        <begin position="18"/>
        <end position="26"/>
    </location>
    <ligand>
        <name>ATP</name>
        <dbReference type="ChEBI" id="CHEBI:30616"/>
    </ligand>
</feature>
<feature type="binding site" evidence="4">
    <location>
        <position position="41"/>
    </location>
    <ligand>
        <name>ATP</name>
        <dbReference type="ChEBI" id="CHEBI:30616"/>
    </ligand>
</feature>
<feature type="modified residue" description="Phosphoserine" evidence="3">
    <location>
        <position position="157"/>
    </location>
</feature>
<feature type="modified residue" description="Phosphothreonine" evidence="2">
    <location>
        <position position="171"/>
    </location>
</feature>
<feature type="sequence conflict" description="In Ref. 4; AAN65121." evidence="7" ref="4">
    <original>WHG</original>
    <variation>RAR</variation>
    <location>
        <begin position="433"/>
        <end position="435"/>
    </location>
</feature>
<keyword id="KW-0067">ATP-binding</keyword>
<keyword id="KW-0418">Kinase</keyword>
<keyword id="KW-0464">Manganese</keyword>
<keyword id="KW-0547">Nucleotide-binding</keyword>
<keyword id="KW-0597">Phosphoprotein</keyword>
<keyword id="KW-1185">Reference proteome</keyword>
<keyword id="KW-0723">Serine/threonine-protein kinase</keyword>
<keyword id="KW-0808">Transferase</keyword>
<protein>
    <recommendedName>
        <fullName>CBL-interacting serine/threonine-protein kinase 5</fullName>
        <ecNumber>2.7.11.1</ecNumber>
    </recommendedName>
    <alternativeName>
        <fullName>SNF1-related kinase 3.24</fullName>
    </alternativeName>
    <alternativeName>
        <fullName>SOS2-like protein kinase PKS19</fullName>
    </alternativeName>
</protein>
<name>CIPK5_ARATH</name>